<accession>P0AD56</accession>
<accession>P36931</accession>
<accession>P76627</accession>
<accession>P77024</accession>
<feature type="chain" id="PRO_0000169294" description="Uncharacterized protein YgaC">
    <location>
        <begin position="1"/>
        <end position="114"/>
    </location>
</feature>
<gene>
    <name type="primary">ygaC</name>
    <name type="ordered locus">SF2699</name>
    <name type="ordered locus">S2885</name>
</gene>
<keyword id="KW-1185">Reference proteome</keyword>
<protein>
    <recommendedName>
        <fullName>Uncharacterized protein YgaC</fullName>
    </recommendedName>
</protein>
<dbReference type="EMBL" id="AE005674">
    <property type="protein sequence ID" value="AAN44192.1"/>
    <property type="molecule type" value="Genomic_DNA"/>
</dbReference>
<dbReference type="EMBL" id="AE014073">
    <property type="protein sequence ID" value="AAP18020.1"/>
    <property type="molecule type" value="Genomic_DNA"/>
</dbReference>
<dbReference type="RefSeq" id="NP_708485.1">
    <property type="nucleotide sequence ID" value="NC_004337.2"/>
</dbReference>
<dbReference type="RefSeq" id="WP_000281320.1">
    <property type="nucleotide sequence ID" value="NZ_WPGW01000014.1"/>
</dbReference>
<dbReference type="SMR" id="P0AD56"/>
<dbReference type="STRING" id="198214.SF2699"/>
<dbReference type="PaxDb" id="198214-SF2699"/>
<dbReference type="GeneID" id="1025888"/>
<dbReference type="KEGG" id="sfl:SF2699"/>
<dbReference type="KEGG" id="sfx:S2885"/>
<dbReference type="PATRIC" id="fig|198214.7.peg.3214"/>
<dbReference type="HOGENOM" id="CLU_2095143_0_0_6"/>
<dbReference type="Proteomes" id="UP000001006">
    <property type="component" value="Chromosome"/>
</dbReference>
<dbReference type="Proteomes" id="UP000002673">
    <property type="component" value="Chromosome"/>
</dbReference>
<dbReference type="Gene3D" id="3.90.1150.40">
    <property type="entry name" value="Protein of unknown function DUF2002"/>
    <property type="match status" value="1"/>
</dbReference>
<dbReference type="InterPro" id="IPR018994">
    <property type="entry name" value="DUF2002"/>
</dbReference>
<dbReference type="NCBIfam" id="NF007844">
    <property type="entry name" value="PRK10556.1-2"/>
    <property type="match status" value="1"/>
</dbReference>
<dbReference type="NCBIfam" id="NF007845">
    <property type="entry name" value="PRK10556.1-3"/>
    <property type="match status" value="1"/>
</dbReference>
<dbReference type="NCBIfam" id="NF007846">
    <property type="entry name" value="PRK10556.1-4"/>
    <property type="match status" value="1"/>
</dbReference>
<dbReference type="Pfam" id="PF09400">
    <property type="entry name" value="DUF2002"/>
    <property type="match status" value="1"/>
</dbReference>
<dbReference type="SUPFAM" id="SSF159894">
    <property type="entry name" value="YgaC/TfoX-N like"/>
    <property type="match status" value="1"/>
</dbReference>
<reference key="1">
    <citation type="journal article" date="2002" name="Nucleic Acids Res.">
        <title>Genome sequence of Shigella flexneri 2a: insights into pathogenicity through comparison with genomes of Escherichia coli K12 and O157.</title>
        <authorList>
            <person name="Jin Q."/>
            <person name="Yuan Z."/>
            <person name="Xu J."/>
            <person name="Wang Y."/>
            <person name="Shen Y."/>
            <person name="Lu W."/>
            <person name="Wang J."/>
            <person name="Liu H."/>
            <person name="Yang J."/>
            <person name="Yang F."/>
            <person name="Zhang X."/>
            <person name="Zhang J."/>
            <person name="Yang G."/>
            <person name="Wu H."/>
            <person name="Qu D."/>
            <person name="Dong J."/>
            <person name="Sun L."/>
            <person name="Xue Y."/>
            <person name="Zhao A."/>
            <person name="Gao Y."/>
            <person name="Zhu J."/>
            <person name="Kan B."/>
            <person name="Ding K."/>
            <person name="Chen S."/>
            <person name="Cheng H."/>
            <person name="Yao Z."/>
            <person name="He B."/>
            <person name="Chen R."/>
            <person name="Ma D."/>
            <person name="Qiang B."/>
            <person name="Wen Y."/>
            <person name="Hou Y."/>
            <person name="Yu J."/>
        </authorList>
    </citation>
    <scope>NUCLEOTIDE SEQUENCE [LARGE SCALE GENOMIC DNA]</scope>
    <source>
        <strain>301 / Serotype 2a</strain>
    </source>
</reference>
<reference key="2">
    <citation type="journal article" date="2003" name="Infect. Immun.">
        <title>Complete genome sequence and comparative genomics of Shigella flexneri serotype 2a strain 2457T.</title>
        <authorList>
            <person name="Wei J."/>
            <person name="Goldberg M.B."/>
            <person name="Burland V."/>
            <person name="Venkatesan M.M."/>
            <person name="Deng W."/>
            <person name="Fournier G."/>
            <person name="Mayhew G.F."/>
            <person name="Plunkett G. III"/>
            <person name="Rose D.J."/>
            <person name="Darling A."/>
            <person name="Mau B."/>
            <person name="Perna N.T."/>
            <person name="Payne S.M."/>
            <person name="Runyen-Janecky L.J."/>
            <person name="Zhou S."/>
            <person name="Schwartz D.C."/>
            <person name="Blattner F.R."/>
        </authorList>
    </citation>
    <scope>NUCLEOTIDE SEQUENCE [LARGE SCALE GENOMIC DNA]</scope>
    <source>
        <strain>ATCC 700930 / 2457T / Serotype 2a</strain>
    </source>
</reference>
<name>YGAC_SHIFL</name>
<proteinExistence type="predicted"/>
<organism>
    <name type="scientific">Shigella flexneri</name>
    <dbReference type="NCBI Taxonomy" id="623"/>
    <lineage>
        <taxon>Bacteria</taxon>
        <taxon>Pseudomonadati</taxon>
        <taxon>Pseudomonadota</taxon>
        <taxon>Gammaproteobacteria</taxon>
        <taxon>Enterobacterales</taxon>
        <taxon>Enterobacteriaceae</taxon>
        <taxon>Shigella</taxon>
    </lineage>
</organism>
<sequence length="114" mass="13066">MYLRPDEVARVLEKVGFTVDVVTQKAYGYRRGENYVYVNREARMGRTALVIHPTLKERSSTLAEPASDIKTCDHYQQFPLYLAGERHEHYGIPHGFSSRVALERYLNGLFGEAS</sequence>